<reference key="1">
    <citation type="submission" date="2007-04" db="EMBL/GenBank/DDBJ databases">
        <title>Complete sequence of Pseudomonas mendocina ymp.</title>
        <authorList>
            <consortium name="US DOE Joint Genome Institute"/>
            <person name="Copeland A."/>
            <person name="Lucas S."/>
            <person name="Lapidus A."/>
            <person name="Barry K."/>
            <person name="Glavina del Rio T."/>
            <person name="Dalin E."/>
            <person name="Tice H."/>
            <person name="Pitluck S."/>
            <person name="Kiss H."/>
            <person name="Brettin T."/>
            <person name="Detter J.C."/>
            <person name="Bruce D."/>
            <person name="Han C."/>
            <person name="Schmutz J."/>
            <person name="Larimer F."/>
            <person name="Land M."/>
            <person name="Hauser L."/>
            <person name="Kyrpides N."/>
            <person name="Mikhailova N."/>
            <person name="Hersman L."/>
            <person name="Dubois J."/>
            <person name="Maurice P."/>
            <person name="Richardson P."/>
        </authorList>
    </citation>
    <scope>NUCLEOTIDE SEQUENCE [LARGE SCALE GENOMIC DNA]</scope>
    <source>
        <strain>ymp</strain>
    </source>
</reference>
<keyword id="KW-0066">ATP synthesis</keyword>
<keyword id="KW-0997">Cell inner membrane</keyword>
<keyword id="KW-1003">Cell membrane</keyword>
<keyword id="KW-0139">CF(1)</keyword>
<keyword id="KW-0375">Hydrogen ion transport</keyword>
<keyword id="KW-0406">Ion transport</keyword>
<keyword id="KW-0472">Membrane</keyword>
<keyword id="KW-0813">Transport</keyword>
<organism>
    <name type="scientific">Ectopseudomonas mendocina (strain ymp)</name>
    <name type="common">Pseudomonas mendocina</name>
    <dbReference type="NCBI Taxonomy" id="399739"/>
    <lineage>
        <taxon>Bacteria</taxon>
        <taxon>Pseudomonadati</taxon>
        <taxon>Pseudomonadota</taxon>
        <taxon>Gammaproteobacteria</taxon>
        <taxon>Pseudomonadales</taxon>
        <taxon>Pseudomonadaceae</taxon>
        <taxon>Ectopseudomonas</taxon>
    </lineage>
</organism>
<name>ATPE_ECTM1</name>
<feature type="chain" id="PRO_1000060983" description="ATP synthase epsilon chain">
    <location>
        <begin position="1"/>
        <end position="144"/>
    </location>
</feature>
<comment type="function">
    <text evidence="1">Produces ATP from ADP in the presence of a proton gradient across the membrane.</text>
</comment>
<comment type="subunit">
    <text evidence="1">F-type ATPases have 2 components, CF(1) - the catalytic core - and CF(0) - the membrane proton channel. CF(1) has five subunits: alpha(3), beta(3), gamma(1), delta(1), epsilon(1). CF(0) has three main subunits: a, b and c.</text>
</comment>
<comment type="subcellular location">
    <subcellularLocation>
        <location evidence="1">Cell inner membrane</location>
        <topology evidence="1">Peripheral membrane protein</topology>
    </subcellularLocation>
</comment>
<comment type="similarity">
    <text evidence="1">Belongs to the ATPase epsilon chain family.</text>
</comment>
<proteinExistence type="inferred from homology"/>
<dbReference type="EMBL" id="CP000680">
    <property type="protein sequence ID" value="ABP87352.1"/>
    <property type="molecule type" value="Genomic_DNA"/>
</dbReference>
<dbReference type="SMR" id="A4Y186"/>
<dbReference type="STRING" id="399739.Pmen_4606"/>
<dbReference type="KEGG" id="pmy:Pmen_4606"/>
<dbReference type="PATRIC" id="fig|399739.8.peg.4671"/>
<dbReference type="eggNOG" id="COG0355">
    <property type="taxonomic scope" value="Bacteria"/>
</dbReference>
<dbReference type="HOGENOM" id="CLU_084338_2_0_6"/>
<dbReference type="OrthoDB" id="9791445at2"/>
<dbReference type="GO" id="GO:0005886">
    <property type="term" value="C:plasma membrane"/>
    <property type="evidence" value="ECO:0007669"/>
    <property type="project" value="UniProtKB-SubCell"/>
</dbReference>
<dbReference type="GO" id="GO:0045259">
    <property type="term" value="C:proton-transporting ATP synthase complex"/>
    <property type="evidence" value="ECO:0007669"/>
    <property type="project" value="UniProtKB-KW"/>
</dbReference>
<dbReference type="GO" id="GO:0005524">
    <property type="term" value="F:ATP binding"/>
    <property type="evidence" value="ECO:0007669"/>
    <property type="project" value="UniProtKB-UniRule"/>
</dbReference>
<dbReference type="GO" id="GO:0046933">
    <property type="term" value="F:proton-transporting ATP synthase activity, rotational mechanism"/>
    <property type="evidence" value="ECO:0007669"/>
    <property type="project" value="UniProtKB-UniRule"/>
</dbReference>
<dbReference type="CDD" id="cd12152">
    <property type="entry name" value="F1-ATPase_delta"/>
    <property type="match status" value="1"/>
</dbReference>
<dbReference type="FunFam" id="2.60.15.10:FF:000001">
    <property type="entry name" value="ATP synthase epsilon chain"/>
    <property type="match status" value="1"/>
</dbReference>
<dbReference type="Gene3D" id="1.20.5.440">
    <property type="entry name" value="ATP synthase delta/epsilon subunit, C-terminal domain"/>
    <property type="match status" value="1"/>
</dbReference>
<dbReference type="Gene3D" id="2.60.15.10">
    <property type="entry name" value="F0F1 ATP synthase delta/epsilon subunit, N-terminal"/>
    <property type="match status" value="1"/>
</dbReference>
<dbReference type="HAMAP" id="MF_00530">
    <property type="entry name" value="ATP_synth_epsil_bac"/>
    <property type="match status" value="1"/>
</dbReference>
<dbReference type="InterPro" id="IPR036794">
    <property type="entry name" value="ATP_F1_dsu/esu_C_sf"/>
</dbReference>
<dbReference type="InterPro" id="IPR001469">
    <property type="entry name" value="ATP_synth_F1_dsu/esu"/>
</dbReference>
<dbReference type="InterPro" id="IPR020546">
    <property type="entry name" value="ATP_synth_F1_dsu/esu_N"/>
</dbReference>
<dbReference type="InterPro" id="IPR020547">
    <property type="entry name" value="ATP_synth_F1_esu_C"/>
</dbReference>
<dbReference type="InterPro" id="IPR036771">
    <property type="entry name" value="ATPsynth_dsu/esu_N"/>
</dbReference>
<dbReference type="NCBIfam" id="TIGR01216">
    <property type="entry name" value="ATP_synt_epsi"/>
    <property type="match status" value="1"/>
</dbReference>
<dbReference type="NCBIfam" id="NF001847">
    <property type="entry name" value="PRK00571.1-4"/>
    <property type="match status" value="1"/>
</dbReference>
<dbReference type="PANTHER" id="PTHR13822">
    <property type="entry name" value="ATP SYNTHASE DELTA/EPSILON CHAIN"/>
    <property type="match status" value="1"/>
</dbReference>
<dbReference type="PANTHER" id="PTHR13822:SF10">
    <property type="entry name" value="ATP SYNTHASE EPSILON CHAIN, CHLOROPLASTIC"/>
    <property type="match status" value="1"/>
</dbReference>
<dbReference type="Pfam" id="PF00401">
    <property type="entry name" value="ATP-synt_DE"/>
    <property type="match status" value="1"/>
</dbReference>
<dbReference type="Pfam" id="PF02823">
    <property type="entry name" value="ATP-synt_DE_N"/>
    <property type="match status" value="1"/>
</dbReference>
<dbReference type="SUPFAM" id="SSF46604">
    <property type="entry name" value="Epsilon subunit of F1F0-ATP synthase C-terminal domain"/>
    <property type="match status" value="1"/>
</dbReference>
<dbReference type="SUPFAM" id="SSF51344">
    <property type="entry name" value="Epsilon subunit of F1F0-ATP synthase N-terminal domain"/>
    <property type="match status" value="1"/>
</dbReference>
<evidence type="ECO:0000255" key="1">
    <source>
        <dbReference type="HAMAP-Rule" id="MF_00530"/>
    </source>
</evidence>
<accession>A4Y186</accession>
<gene>
    <name evidence="1" type="primary">atpC</name>
    <name type="ordered locus">Pmen_4606</name>
</gene>
<sequence length="144" mass="15323">MAMSVHCDIVSAEEELFSGLVEMVIAHGHLGDLGILPGHTPLLTDLKPGPVRVIKQGGTEEVFYISGGFLEVQPSMVKVLADTAVRAGDLDEAAAIEARKAAEKALSEKGTEFDYGSAAARLAEAAAQLRTIEEMRKKFGGRSR</sequence>
<protein>
    <recommendedName>
        <fullName evidence="1">ATP synthase epsilon chain</fullName>
    </recommendedName>
    <alternativeName>
        <fullName evidence="1">ATP synthase F1 sector epsilon subunit</fullName>
    </alternativeName>
    <alternativeName>
        <fullName evidence="1">F-ATPase epsilon subunit</fullName>
    </alternativeName>
</protein>